<name>QUEC_CLOBL</name>
<sequence length="219" mass="24865">MNKEKAIVVFSGGQDSTTCLFWAKKKYKEVIAVSFDYNQKHKLELDCAKDICKKYNIEHHILDLNLLNQLAPNSLTRQDITVDKSAPKEGVPNSFVDGRNLLFLSFVAVFAKQKGINTIITGVSQSDFSGYPDCRDVFIKSLNVTLNLAMDYEFEIITPLMWINKAETWKMAYDLGVLDIVKEETLTCYNGIKADGCGECPACKLRKKGYLEFEKYLMN</sequence>
<reference key="1">
    <citation type="submission" date="2007-06" db="EMBL/GenBank/DDBJ databases">
        <authorList>
            <person name="Brinkac L.M."/>
            <person name="Daugherty S."/>
            <person name="Dodson R.J."/>
            <person name="Madupu R."/>
            <person name="Brown J.L."/>
            <person name="Bruce D."/>
            <person name="Detter C."/>
            <person name="Munk C."/>
            <person name="Smith L.A."/>
            <person name="Smith T.J."/>
            <person name="White O."/>
            <person name="Brettin T.S."/>
        </authorList>
    </citation>
    <scope>NUCLEOTIDE SEQUENCE [LARGE SCALE GENOMIC DNA]</scope>
    <source>
        <strain>Langeland / NCTC 10281 / Type F</strain>
    </source>
</reference>
<gene>
    <name evidence="1" type="primary">queC</name>
    <name type="ordered locus">CLI_1639</name>
</gene>
<feature type="chain" id="PRO_0000336907" description="7-cyano-7-deazaguanine synthase">
    <location>
        <begin position="1"/>
        <end position="219"/>
    </location>
</feature>
<feature type="binding site" evidence="1">
    <location>
        <begin position="10"/>
        <end position="20"/>
    </location>
    <ligand>
        <name>ATP</name>
        <dbReference type="ChEBI" id="CHEBI:30616"/>
    </ligand>
</feature>
<feature type="binding site" evidence="1">
    <location>
        <position position="188"/>
    </location>
    <ligand>
        <name>Zn(2+)</name>
        <dbReference type="ChEBI" id="CHEBI:29105"/>
    </ligand>
</feature>
<feature type="binding site" evidence="1">
    <location>
        <position position="197"/>
    </location>
    <ligand>
        <name>Zn(2+)</name>
        <dbReference type="ChEBI" id="CHEBI:29105"/>
    </ligand>
</feature>
<feature type="binding site" evidence="1">
    <location>
        <position position="200"/>
    </location>
    <ligand>
        <name>Zn(2+)</name>
        <dbReference type="ChEBI" id="CHEBI:29105"/>
    </ligand>
</feature>
<feature type="binding site" evidence="1">
    <location>
        <position position="203"/>
    </location>
    <ligand>
        <name>Zn(2+)</name>
        <dbReference type="ChEBI" id="CHEBI:29105"/>
    </ligand>
</feature>
<keyword id="KW-0067">ATP-binding</keyword>
<keyword id="KW-0436">Ligase</keyword>
<keyword id="KW-0479">Metal-binding</keyword>
<keyword id="KW-0547">Nucleotide-binding</keyword>
<keyword id="KW-0671">Queuosine biosynthesis</keyword>
<keyword id="KW-0862">Zinc</keyword>
<proteinExistence type="inferred from homology"/>
<organism>
    <name type="scientific">Clostridium botulinum (strain Langeland / NCTC 10281 / Type F)</name>
    <dbReference type="NCBI Taxonomy" id="441772"/>
    <lineage>
        <taxon>Bacteria</taxon>
        <taxon>Bacillati</taxon>
        <taxon>Bacillota</taxon>
        <taxon>Clostridia</taxon>
        <taxon>Eubacteriales</taxon>
        <taxon>Clostridiaceae</taxon>
        <taxon>Clostridium</taxon>
    </lineage>
</organism>
<comment type="function">
    <text evidence="1">Catalyzes the ATP-dependent conversion of 7-carboxy-7-deazaguanine (CDG) to 7-cyano-7-deazaguanine (preQ(0)).</text>
</comment>
<comment type="catalytic activity">
    <reaction evidence="1">
        <text>7-carboxy-7-deazaguanine + NH4(+) + ATP = 7-cyano-7-deazaguanine + ADP + phosphate + H2O + H(+)</text>
        <dbReference type="Rhea" id="RHEA:27982"/>
        <dbReference type="ChEBI" id="CHEBI:15377"/>
        <dbReference type="ChEBI" id="CHEBI:15378"/>
        <dbReference type="ChEBI" id="CHEBI:28938"/>
        <dbReference type="ChEBI" id="CHEBI:30616"/>
        <dbReference type="ChEBI" id="CHEBI:43474"/>
        <dbReference type="ChEBI" id="CHEBI:45075"/>
        <dbReference type="ChEBI" id="CHEBI:61036"/>
        <dbReference type="ChEBI" id="CHEBI:456216"/>
        <dbReference type="EC" id="6.3.4.20"/>
    </reaction>
</comment>
<comment type="cofactor">
    <cofactor evidence="1">
        <name>Zn(2+)</name>
        <dbReference type="ChEBI" id="CHEBI:29105"/>
    </cofactor>
    <text evidence="1">Binds 1 zinc ion per subunit.</text>
</comment>
<comment type="pathway">
    <text evidence="1">Purine metabolism; 7-cyano-7-deazaguanine biosynthesis.</text>
</comment>
<comment type="subunit">
    <text evidence="1">Homodimer.</text>
</comment>
<comment type="similarity">
    <text evidence="1">Belongs to the QueC family.</text>
</comment>
<evidence type="ECO:0000255" key="1">
    <source>
        <dbReference type="HAMAP-Rule" id="MF_01633"/>
    </source>
</evidence>
<protein>
    <recommendedName>
        <fullName evidence="1">7-cyano-7-deazaguanine synthase</fullName>
        <ecNumber evidence="1">6.3.4.20</ecNumber>
    </recommendedName>
    <alternativeName>
        <fullName evidence="1">7-cyano-7-carbaguanine synthase</fullName>
    </alternativeName>
    <alternativeName>
        <fullName evidence="1">PreQ(0) synthase</fullName>
    </alternativeName>
    <alternativeName>
        <fullName evidence="1">Queuosine biosynthesis protein QueC</fullName>
    </alternativeName>
</protein>
<accession>A7GDP2</accession>
<dbReference type="EC" id="6.3.4.20" evidence="1"/>
<dbReference type="EMBL" id="CP000728">
    <property type="protein sequence ID" value="ABS40564.1"/>
    <property type="molecule type" value="Genomic_DNA"/>
</dbReference>
<dbReference type="RefSeq" id="WP_012099661.1">
    <property type="nucleotide sequence ID" value="NC_009699.1"/>
</dbReference>
<dbReference type="SMR" id="A7GDP2"/>
<dbReference type="KEGG" id="cbf:CLI_1639"/>
<dbReference type="HOGENOM" id="CLU_081854_0_0_9"/>
<dbReference type="UniPathway" id="UPA00391"/>
<dbReference type="Proteomes" id="UP000002410">
    <property type="component" value="Chromosome"/>
</dbReference>
<dbReference type="GO" id="GO:0005524">
    <property type="term" value="F:ATP binding"/>
    <property type="evidence" value="ECO:0007669"/>
    <property type="project" value="UniProtKB-UniRule"/>
</dbReference>
<dbReference type="GO" id="GO:0016879">
    <property type="term" value="F:ligase activity, forming carbon-nitrogen bonds"/>
    <property type="evidence" value="ECO:0007669"/>
    <property type="project" value="UniProtKB-UniRule"/>
</dbReference>
<dbReference type="GO" id="GO:0008270">
    <property type="term" value="F:zinc ion binding"/>
    <property type="evidence" value="ECO:0007669"/>
    <property type="project" value="UniProtKB-UniRule"/>
</dbReference>
<dbReference type="GO" id="GO:0008616">
    <property type="term" value="P:queuosine biosynthetic process"/>
    <property type="evidence" value="ECO:0007669"/>
    <property type="project" value="UniProtKB-UniRule"/>
</dbReference>
<dbReference type="CDD" id="cd01995">
    <property type="entry name" value="QueC-like"/>
    <property type="match status" value="1"/>
</dbReference>
<dbReference type="FunFam" id="3.40.50.620:FF:000017">
    <property type="entry name" value="7-cyano-7-deazaguanine synthase"/>
    <property type="match status" value="1"/>
</dbReference>
<dbReference type="Gene3D" id="3.40.50.620">
    <property type="entry name" value="HUPs"/>
    <property type="match status" value="1"/>
</dbReference>
<dbReference type="HAMAP" id="MF_01633">
    <property type="entry name" value="QueC"/>
    <property type="match status" value="1"/>
</dbReference>
<dbReference type="InterPro" id="IPR018317">
    <property type="entry name" value="QueC"/>
</dbReference>
<dbReference type="InterPro" id="IPR014729">
    <property type="entry name" value="Rossmann-like_a/b/a_fold"/>
</dbReference>
<dbReference type="NCBIfam" id="TIGR00364">
    <property type="entry name" value="7-cyano-7-deazaguanine synthase QueC"/>
    <property type="match status" value="1"/>
</dbReference>
<dbReference type="PANTHER" id="PTHR42914">
    <property type="entry name" value="7-CYANO-7-DEAZAGUANINE SYNTHASE"/>
    <property type="match status" value="1"/>
</dbReference>
<dbReference type="PANTHER" id="PTHR42914:SF1">
    <property type="entry name" value="7-CYANO-7-DEAZAGUANINE SYNTHASE"/>
    <property type="match status" value="1"/>
</dbReference>
<dbReference type="Pfam" id="PF06508">
    <property type="entry name" value="QueC"/>
    <property type="match status" value="1"/>
</dbReference>
<dbReference type="PIRSF" id="PIRSF006293">
    <property type="entry name" value="ExsB"/>
    <property type="match status" value="1"/>
</dbReference>
<dbReference type="SUPFAM" id="SSF52402">
    <property type="entry name" value="Adenine nucleotide alpha hydrolases-like"/>
    <property type="match status" value="1"/>
</dbReference>